<evidence type="ECO:0000255" key="1">
    <source>
        <dbReference type="HAMAP-Rule" id="MF_00151"/>
    </source>
</evidence>
<comment type="function">
    <text evidence="1">Reversibly transfers an adenylyl group from ATP to 4'-phosphopantetheine, yielding dephospho-CoA (dPCoA) and pyrophosphate.</text>
</comment>
<comment type="catalytic activity">
    <reaction evidence="1">
        <text>(R)-4'-phosphopantetheine + ATP + H(+) = 3'-dephospho-CoA + diphosphate</text>
        <dbReference type="Rhea" id="RHEA:19801"/>
        <dbReference type="ChEBI" id="CHEBI:15378"/>
        <dbReference type="ChEBI" id="CHEBI:30616"/>
        <dbReference type="ChEBI" id="CHEBI:33019"/>
        <dbReference type="ChEBI" id="CHEBI:57328"/>
        <dbReference type="ChEBI" id="CHEBI:61723"/>
        <dbReference type="EC" id="2.7.7.3"/>
    </reaction>
</comment>
<comment type="cofactor">
    <cofactor evidence="1">
        <name>Mg(2+)</name>
        <dbReference type="ChEBI" id="CHEBI:18420"/>
    </cofactor>
</comment>
<comment type="pathway">
    <text evidence="1">Cofactor biosynthesis; coenzyme A biosynthesis; CoA from (R)-pantothenate: step 4/5.</text>
</comment>
<comment type="subunit">
    <text evidence="1">Homohexamer.</text>
</comment>
<comment type="subcellular location">
    <subcellularLocation>
        <location evidence="1">Cytoplasm</location>
    </subcellularLocation>
</comment>
<comment type="similarity">
    <text evidence="1">Belongs to the bacterial CoaD family.</text>
</comment>
<accession>C0Q1W7</accession>
<organism>
    <name type="scientific">Salmonella paratyphi C (strain RKS4594)</name>
    <dbReference type="NCBI Taxonomy" id="476213"/>
    <lineage>
        <taxon>Bacteria</taxon>
        <taxon>Pseudomonadati</taxon>
        <taxon>Pseudomonadota</taxon>
        <taxon>Gammaproteobacteria</taxon>
        <taxon>Enterobacterales</taxon>
        <taxon>Enterobacteriaceae</taxon>
        <taxon>Salmonella</taxon>
    </lineage>
</organism>
<name>COAD_SALPC</name>
<feature type="chain" id="PRO_1000123298" description="Phosphopantetheine adenylyltransferase">
    <location>
        <begin position="1"/>
        <end position="159"/>
    </location>
</feature>
<feature type="binding site" evidence="1">
    <location>
        <begin position="10"/>
        <end position="11"/>
    </location>
    <ligand>
        <name>ATP</name>
        <dbReference type="ChEBI" id="CHEBI:30616"/>
    </ligand>
</feature>
<feature type="binding site" evidence="1">
    <location>
        <position position="10"/>
    </location>
    <ligand>
        <name>substrate</name>
    </ligand>
</feature>
<feature type="binding site" evidence="1">
    <location>
        <position position="18"/>
    </location>
    <ligand>
        <name>ATP</name>
        <dbReference type="ChEBI" id="CHEBI:30616"/>
    </ligand>
</feature>
<feature type="binding site" evidence="1">
    <location>
        <position position="42"/>
    </location>
    <ligand>
        <name>substrate</name>
    </ligand>
</feature>
<feature type="binding site" evidence="1">
    <location>
        <position position="74"/>
    </location>
    <ligand>
        <name>substrate</name>
    </ligand>
</feature>
<feature type="binding site" evidence="1">
    <location>
        <position position="88"/>
    </location>
    <ligand>
        <name>substrate</name>
    </ligand>
</feature>
<feature type="binding site" evidence="1">
    <location>
        <begin position="89"/>
        <end position="91"/>
    </location>
    <ligand>
        <name>ATP</name>
        <dbReference type="ChEBI" id="CHEBI:30616"/>
    </ligand>
</feature>
<feature type="binding site" evidence="1">
    <location>
        <position position="99"/>
    </location>
    <ligand>
        <name>ATP</name>
        <dbReference type="ChEBI" id="CHEBI:30616"/>
    </ligand>
</feature>
<feature type="binding site" evidence="1">
    <location>
        <begin position="124"/>
        <end position="130"/>
    </location>
    <ligand>
        <name>ATP</name>
        <dbReference type="ChEBI" id="CHEBI:30616"/>
    </ligand>
</feature>
<feature type="site" description="Transition state stabilizer" evidence="1">
    <location>
        <position position="18"/>
    </location>
</feature>
<protein>
    <recommendedName>
        <fullName evidence="1">Phosphopantetheine adenylyltransferase</fullName>
        <ecNumber evidence="1">2.7.7.3</ecNumber>
    </recommendedName>
    <alternativeName>
        <fullName evidence="1">Dephospho-CoA pyrophosphorylase</fullName>
    </alternativeName>
    <alternativeName>
        <fullName evidence="1">Pantetheine-phosphate adenylyltransferase</fullName>
        <shortName evidence="1">PPAT</shortName>
    </alternativeName>
</protein>
<dbReference type="EC" id="2.7.7.3" evidence="1"/>
<dbReference type="EMBL" id="CP000857">
    <property type="protein sequence ID" value="ACN47883.1"/>
    <property type="molecule type" value="Genomic_DNA"/>
</dbReference>
<dbReference type="RefSeq" id="WP_001171883.1">
    <property type="nucleotide sequence ID" value="NC_012125.1"/>
</dbReference>
<dbReference type="SMR" id="C0Q1W7"/>
<dbReference type="KEGG" id="sei:SPC_3807"/>
<dbReference type="HOGENOM" id="CLU_100149_0_1_6"/>
<dbReference type="UniPathway" id="UPA00241">
    <property type="reaction ID" value="UER00355"/>
</dbReference>
<dbReference type="Proteomes" id="UP000001599">
    <property type="component" value="Chromosome"/>
</dbReference>
<dbReference type="GO" id="GO:0005737">
    <property type="term" value="C:cytoplasm"/>
    <property type="evidence" value="ECO:0007669"/>
    <property type="project" value="UniProtKB-SubCell"/>
</dbReference>
<dbReference type="GO" id="GO:0005524">
    <property type="term" value="F:ATP binding"/>
    <property type="evidence" value="ECO:0007669"/>
    <property type="project" value="UniProtKB-KW"/>
</dbReference>
<dbReference type="GO" id="GO:0004595">
    <property type="term" value="F:pantetheine-phosphate adenylyltransferase activity"/>
    <property type="evidence" value="ECO:0007669"/>
    <property type="project" value="UniProtKB-UniRule"/>
</dbReference>
<dbReference type="GO" id="GO:0015937">
    <property type="term" value="P:coenzyme A biosynthetic process"/>
    <property type="evidence" value="ECO:0007669"/>
    <property type="project" value="UniProtKB-UniRule"/>
</dbReference>
<dbReference type="CDD" id="cd02163">
    <property type="entry name" value="PPAT"/>
    <property type="match status" value="1"/>
</dbReference>
<dbReference type="FunFam" id="3.40.50.620:FF:000012">
    <property type="entry name" value="Phosphopantetheine adenylyltransferase"/>
    <property type="match status" value="1"/>
</dbReference>
<dbReference type="Gene3D" id="3.40.50.620">
    <property type="entry name" value="HUPs"/>
    <property type="match status" value="1"/>
</dbReference>
<dbReference type="HAMAP" id="MF_00151">
    <property type="entry name" value="PPAT_bact"/>
    <property type="match status" value="1"/>
</dbReference>
<dbReference type="InterPro" id="IPR004821">
    <property type="entry name" value="Cyt_trans-like"/>
</dbReference>
<dbReference type="InterPro" id="IPR001980">
    <property type="entry name" value="PPAT"/>
</dbReference>
<dbReference type="InterPro" id="IPR014729">
    <property type="entry name" value="Rossmann-like_a/b/a_fold"/>
</dbReference>
<dbReference type="NCBIfam" id="TIGR01510">
    <property type="entry name" value="coaD_prev_kdtB"/>
    <property type="match status" value="1"/>
</dbReference>
<dbReference type="NCBIfam" id="TIGR00125">
    <property type="entry name" value="cyt_tran_rel"/>
    <property type="match status" value="1"/>
</dbReference>
<dbReference type="PANTHER" id="PTHR21342">
    <property type="entry name" value="PHOSPHOPANTETHEINE ADENYLYLTRANSFERASE"/>
    <property type="match status" value="1"/>
</dbReference>
<dbReference type="PANTHER" id="PTHR21342:SF1">
    <property type="entry name" value="PHOSPHOPANTETHEINE ADENYLYLTRANSFERASE"/>
    <property type="match status" value="1"/>
</dbReference>
<dbReference type="Pfam" id="PF01467">
    <property type="entry name" value="CTP_transf_like"/>
    <property type="match status" value="1"/>
</dbReference>
<dbReference type="PRINTS" id="PR01020">
    <property type="entry name" value="LPSBIOSNTHSS"/>
</dbReference>
<dbReference type="SUPFAM" id="SSF52374">
    <property type="entry name" value="Nucleotidylyl transferase"/>
    <property type="match status" value="1"/>
</dbReference>
<reference key="1">
    <citation type="journal article" date="2009" name="PLoS ONE">
        <title>Salmonella paratyphi C: genetic divergence from Salmonella choleraesuis and pathogenic convergence with Salmonella typhi.</title>
        <authorList>
            <person name="Liu W.-Q."/>
            <person name="Feng Y."/>
            <person name="Wang Y."/>
            <person name="Zou Q.-H."/>
            <person name="Chen F."/>
            <person name="Guo J.-T."/>
            <person name="Peng Y.-H."/>
            <person name="Jin Y."/>
            <person name="Li Y.-G."/>
            <person name="Hu S.-N."/>
            <person name="Johnston R.N."/>
            <person name="Liu G.-R."/>
            <person name="Liu S.-L."/>
        </authorList>
    </citation>
    <scope>NUCLEOTIDE SEQUENCE [LARGE SCALE GENOMIC DNA]</scope>
    <source>
        <strain>RKS4594</strain>
    </source>
</reference>
<proteinExistence type="inferred from homology"/>
<sequence length="159" mass="17890">MQKRAIYPGTFDPITNGHLDIVTRATQMFDHVILAIAASPGKKPMFTLDERVALAQKATAHLGNVEVVGFSDLMANFARDRQANILIRGLRAVADFEYEMQLAHMNRHLIPQLESVFLIPSKEWSFISSSLVKEVARHQGDVTHFLPDNVHQALMDKLK</sequence>
<gene>
    <name evidence="1" type="primary">coaD</name>
    <name type="ordered locus">SPC_3807</name>
</gene>
<keyword id="KW-0067">ATP-binding</keyword>
<keyword id="KW-0173">Coenzyme A biosynthesis</keyword>
<keyword id="KW-0963">Cytoplasm</keyword>
<keyword id="KW-0460">Magnesium</keyword>
<keyword id="KW-0547">Nucleotide-binding</keyword>
<keyword id="KW-0548">Nucleotidyltransferase</keyword>
<keyword id="KW-0808">Transferase</keyword>